<dbReference type="EMBL" id="CP000348">
    <property type="protein sequence ID" value="ABJ78211.1"/>
    <property type="molecule type" value="Genomic_DNA"/>
</dbReference>
<dbReference type="RefSeq" id="WP_011669549.1">
    <property type="nucleotide sequence ID" value="NC_008508.1"/>
</dbReference>
<dbReference type="SMR" id="Q054N4"/>
<dbReference type="GeneID" id="61173137"/>
<dbReference type="KEGG" id="lbl:LBL_0634"/>
<dbReference type="HOGENOM" id="CLU_087843_3_0_12"/>
<dbReference type="GO" id="GO:0005829">
    <property type="term" value="C:cytosol"/>
    <property type="evidence" value="ECO:0007669"/>
    <property type="project" value="TreeGrafter"/>
</dbReference>
<dbReference type="GO" id="GO:0003723">
    <property type="term" value="F:RNA binding"/>
    <property type="evidence" value="ECO:0007669"/>
    <property type="project" value="UniProtKB-UniRule"/>
</dbReference>
<dbReference type="GO" id="GO:0006353">
    <property type="term" value="P:DNA-templated transcription termination"/>
    <property type="evidence" value="ECO:0007669"/>
    <property type="project" value="UniProtKB-UniRule"/>
</dbReference>
<dbReference type="GO" id="GO:0031564">
    <property type="term" value="P:transcription antitermination"/>
    <property type="evidence" value="ECO:0007669"/>
    <property type="project" value="UniProtKB-KW"/>
</dbReference>
<dbReference type="CDD" id="cd00619">
    <property type="entry name" value="Terminator_NusB"/>
    <property type="match status" value="1"/>
</dbReference>
<dbReference type="FunFam" id="1.10.940.10:FF:000013">
    <property type="entry name" value="Transcription antitermination protein NusB"/>
    <property type="match status" value="1"/>
</dbReference>
<dbReference type="Gene3D" id="1.10.940.10">
    <property type="entry name" value="NusB-like"/>
    <property type="match status" value="1"/>
</dbReference>
<dbReference type="HAMAP" id="MF_00073">
    <property type="entry name" value="NusB"/>
    <property type="match status" value="1"/>
</dbReference>
<dbReference type="InterPro" id="IPR035926">
    <property type="entry name" value="NusB-like_sf"/>
</dbReference>
<dbReference type="InterPro" id="IPR011605">
    <property type="entry name" value="NusB_fam"/>
</dbReference>
<dbReference type="InterPro" id="IPR006027">
    <property type="entry name" value="NusB_RsmB_TIM44"/>
</dbReference>
<dbReference type="NCBIfam" id="TIGR01951">
    <property type="entry name" value="nusB"/>
    <property type="match status" value="1"/>
</dbReference>
<dbReference type="PANTHER" id="PTHR11078:SF3">
    <property type="entry name" value="ANTITERMINATION NUSB DOMAIN-CONTAINING PROTEIN"/>
    <property type="match status" value="1"/>
</dbReference>
<dbReference type="PANTHER" id="PTHR11078">
    <property type="entry name" value="N UTILIZATION SUBSTANCE PROTEIN B-RELATED"/>
    <property type="match status" value="1"/>
</dbReference>
<dbReference type="Pfam" id="PF01029">
    <property type="entry name" value="NusB"/>
    <property type="match status" value="1"/>
</dbReference>
<dbReference type="SUPFAM" id="SSF48013">
    <property type="entry name" value="NusB-like"/>
    <property type="match status" value="1"/>
</dbReference>
<gene>
    <name evidence="1" type="primary">nusB</name>
    <name type="ordered locus">LBL_0634</name>
</gene>
<accession>Q054N4</accession>
<proteinExistence type="inferred from homology"/>
<sequence>MSARRTSREIAVMALYQLELTGPPLKEVLKFKWYDKKTEPEERDFAVSIVNGVVKNQEQIDTLIKKYSKNWDFSRISIVNKAILRLSVFALLYSWEVPKNVTIDEAVELTKEFESEESARFVNGILDAILKNETKSDG</sequence>
<evidence type="ECO:0000255" key="1">
    <source>
        <dbReference type="HAMAP-Rule" id="MF_00073"/>
    </source>
</evidence>
<comment type="function">
    <text evidence="1">Involved in transcription antitermination. Required for transcription of ribosomal RNA (rRNA) genes. Binds specifically to the boxA antiterminator sequence of the ribosomal RNA (rrn) operons.</text>
</comment>
<comment type="similarity">
    <text evidence="1">Belongs to the NusB family.</text>
</comment>
<feature type="chain" id="PRO_1000023744" description="Transcription antitermination protein NusB">
    <location>
        <begin position="1"/>
        <end position="138"/>
    </location>
</feature>
<reference key="1">
    <citation type="journal article" date="2006" name="Proc. Natl. Acad. Sci. U.S.A.">
        <title>Genome reduction in Leptospira borgpetersenii reflects limited transmission potential.</title>
        <authorList>
            <person name="Bulach D.M."/>
            <person name="Zuerner R.L."/>
            <person name="Wilson P."/>
            <person name="Seemann T."/>
            <person name="McGrath A."/>
            <person name="Cullen P.A."/>
            <person name="Davis J."/>
            <person name="Johnson M."/>
            <person name="Kuczek E."/>
            <person name="Alt D.P."/>
            <person name="Peterson-Burch B."/>
            <person name="Coppel R.L."/>
            <person name="Rood J.I."/>
            <person name="Davies J.K."/>
            <person name="Adler B."/>
        </authorList>
    </citation>
    <scope>NUCLEOTIDE SEQUENCE [LARGE SCALE GENOMIC DNA]</scope>
    <source>
        <strain>L550</strain>
    </source>
</reference>
<name>NUSB_LEPBL</name>
<protein>
    <recommendedName>
        <fullName evidence="1">Transcription antitermination protein NusB</fullName>
    </recommendedName>
    <alternativeName>
        <fullName evidence="1">Antitermination factor NusB</fullName>
    </alternativeName>
</protein>
<keyword id="KW-0694">RNA-binding</keyword>
<keyword id="KW-0804">Transcription</keyword>
<keyword id="KW-0889">Transcription antitermination</keyword>
<keyword id="KW-0805">Transcription regulation</keyword>
<organism>
    <name type="scientific">Leptospira borgpetersenii serovar Hardjo-bovis (strain L550)</name>
    <dbReference type="NCBI Taxonomy" id="355276"/>
    <lineage>
        <taxon>Bacteria</taxon>
        <taxon>Pseudomonadati</taxon>
        <taxon>Spirochaetota</taxon>
        <taxon>Spirochaetia</taxon>
        <taxon>Leptospirales</taxon>
        <taxon>Leptospiraceae</taxon>
        <taxon>Leptospira</taxon>
    </lineage>
</organism>